<reference key="1">
    <citation type="journal article" date="2005" name="Proc. Natl. Acad. Sci. U.S.A.">
        <title>The complete genome sequence of Mycobacterium avium subspecies paratuberculosis.</title>
        <authorList>
            <person name="Li L."/>
            <person name="Bannantine J.P."/>
            <person name="Zhang Q."/>
            <person name="Amonsin A."/>
            <person name="May B.J."/>
            <person name="Alt D."/>
            <person name="Banerji N."/>
            <person name="Kanjilal S."/>
            <person name="Kapur V."/>
        </authorList>
    </citation>
    <scope>NUCLEOTIDE SEQUENCE [LARGE SCALE GENOMIC DNA]</scope>
    <source>
        <strain>ATCC BAA-968 / K-10</strain>
    </source>
</reference>
<proteinExistence type="inferred from homology"/>
<comment type="function">
    <text evidence="1">Tetrapolymerization of the monopyrrole PBG into the hydroxymethylbilane pre-uroporphyrinogen in several discrete steps.</text>
</comment>
<comment type="catalytic activity">
    <reaction evidence="1">
        <text>4 porphobilinogen + H2O = hydroxymethylbilane + 4 NH4(+)</text>
        <dbReference type="Rhea" id="RHEA:13185"/>
        <dbReference type="ChEBI" id="CHEBI:15377"/>
        <dbReference type="ChEBI" id="CHEBI:28938"/>
        <dbReference type="ChEBI" id="CHEBI:57845"/>
        <dbReference type="ChEBI" id="CHEBI:58126"/>
        <dbReference type="EC" id="2.5.1.61"/>
    </reaction>
</comment>
<comment type="cofactor">
    <cofactor evidence="1">
        <name>dipyrromethane</name>
        <dbReference type="ChEBI" id="CHEBI:60342"/>
    </cofactor>
    <text evidence="1">Binds 1 dipyrromethane group covalently.</text>
</comment>
<comment type="pathway">
    <text evidence="1">Porphyrin-containing compound metabolism; protoporphyrin-IX biosynthesis; coproporphyrinogen-III from 5-aminolevulinate: step 2/4.</text>
</comment>
<comment type="subunit">
    <text evidence="1">Monomer.</text>
</comment>
<comment type="miscellaneous">
    <text evidence="1">The porphobilinogen subunits are added to the dipyrromethane group.</text>
</comment>
<comment type="similarity">
    <text evidence="1">Belongs to the HMBS family.</text>
</comment>
<dbReference type="EC" id="2.5.1.61" evidence="1"/>
<dbReference type="EMBL" id="AE016958">
    <property type="protein sequence ID" value="AAS06553.1"/>
    <property type="molecule type" value="Genomic_DNA"/>
</dbReference>
<dbReference type="RefSeq" id="WP_003873693.1">
    <property type="nucleotide sequence ID" value="NZ_CP106873.1"/>
</dbReference>
<dbReference type="SMR" id="Q73SS0"/>
<dbReference type="STRING" id="262316.MAP_4003"/>
<dbReference type="KEGG" id="mpa:MAP_4003"/>
<dbReference type="eggNOG" id="COG0181">
    <property type="taxonomic scope" value="Bacteria"/>
</dbReference>
<dbReference type="HOGENOM" id="CLU_019704_1_0_11"/>
<dbReference type="UniPathway" id="UPA00251">
    <property type="reaction ID" value="UER00319"/>
</dbReference>
<dbReference type="Proteomes" id="UP000000580">
    <property type="component" value="Chromosome"/>
</dbReference>
<dbReference type="GO" id="GO:0005737">
    <property type="term" value="C:cytoplasm"/>
    <property type="evidence" value="ECO:0007669"/>
    <property type="project" value="TreeGrafter"/>
</dbReference>
<dbReference type="GO" id="GO:0004418">
    <property type="term" value="F:hydroxymethylbilane synthase activity"/>
    <property type="evidence" value="ECO:0007669"/>
    <property type="project" value="UniProtKB-UniRule"/>
</dbReference>
<dbReference type="GO" id="GO:0006782">
    <property type="term" value="P:protoporphyrinogen IX biosynthetic process"/>
    <property type="evidence" value="ECO:0007669"/>
    <property type="project" value="UniProtKB-UniRule"/>
</dbReference>
<dbReference type="FunFam" id="3.30.160.40:FF:000001">
    <property type="entry name" value="Porphobilinogen deaminase"/>
    <property type="match status" value="1"/>
</dbReference>
<dbReference type="FunFam" id="3.40.190.10:FF:000005">
    <property type="entry name" value="Porphobilinogen deaminase"/>
    <property type="match status" value="1"/>
</dbReference>
<dbReference type="Gene3D" id="3.40.190.10">
    <property type="entry name" value="Periplasmic binding protein-like II"/>
    <property type="match status" value="2"/>
</dbReference>
<dbReference type="Gene3D" id="3.30.160.40">
    <property type="entry name" value="Porphobilinogen deaminase, C-terminal domain"/>
    <property type="match status" value="1"/>
</dbReference>
<dbReference type="HAMAP" id="MF_00260">
    <property type="entry name" value="Porphobil_deam"/>
    <property type="match status" value="1"/>
</dbReference>
<dbReference type="InterPro" id="IPR000860">
    <property type="entry name" value="HemC"/>
</dbReference>
<dbReference type="InterPro" id="IPR022419">
    <property type="entry name" value="Porphobilin_deaminase_cofac_BS"/>
</dbReference>
<dbReference type="InterPro" id="IPR022417">
    <property type="entry name" value="Porphobilin_deaminase_N"/>
</dbReference>
<dbReference type="InterPro" id="IPR022418">
    <property type="entry name" value="Porphobilinogen_deaminase_C"/>
</dbReference>
<dbReference type="InterPro" id="IPR036803">
    <property type="entry name" value="Porphobilinogen_deaminase_C_sf"/>
</dbReference>
<dbReference type="NCBIfam" id="TIGR00212">
    <property type="entry name" value="hemC"/>
    <property type="match status" value="1"/>
</dbReference>
<dbReference type="PANTHER" id="PTHR11557">
    <property type="entry name" value="PORPHOBILINOGEN DEAMINASE"/>
    <property type="match status" value="1"/>
</dbReference>
<dbReference type="PANTHER" id="PTHR11557:SF0">
    <property type="entry name" value="PORPHOBILINOGEN DEAMINASE"/>
    <property type="match status" value="1"/>
</dbReference>
<dbReference type="Pfam" id="PF01379">
    <property type="entry name" value="Porphobil_deam"/>
    <property type="match status" value="1"/>
</dbReference>
<dbReference type="Pfam" id="PF03900">
    <property type="entry name" value="Porphobil_deamC"/>
    <property type="match status" value="1"/>
</dbReference>
<dbReference type="PIRSF" id="PIRSF001438">
    <property type="entry name" value="4pyrrol_synth_OHMeBilane_synth"/>
    <property type="match status" value="1"/>
</dbReference>
<dbReference type="PRINTS" id="PR00151">
    <property type="entry name" value="PORPHBDMNASE"/>
</dbReference>
<dbReference type="SUPFAM" id="SSF53850">
    <property type="entry name" value="Periplasmic binding protein-like II"/>
    <property type="match status" value="1"/>
</dbReference>
<dbReference type="SUPFAM" id="SSF54782">
    <property type="entry name" value="Porphobilinogen deaminase (hydroxymethylbilane synthase), C-terminal domain"/>
    <property type="match status" value="1"/>
</dbReference>
<dbReference type="PROSITE" id="PS00533">
    <property type="entry name" value="PORPHOBILINOGEN_DEAM"/>
    <property type="match status" value="1"/>
</dbReference>
<gene>
    <name evidence="1" type="primary">hemC</name>
    <name type="ordered locus">MAP_4003</name>
</gene>
<sequence>MIRIGTRGSLLATTQAGGVRDALIARGHPAELVTITTAGDRSSGPIESLGVGVFTTALREAIEEGRVDAAVHSHKDLPTADDPRFAVAAIPARNDPRDAVVARDGLVLAELPPGSLVGTSSPRRAAQLRALGLGLEIRPLRGNLDTRLNRVSSGDLDAIVVARAGLARLGRLGDVTETLEPVQMLPAPAQGALAVECRAGDSRLAAVLAELDDADTRASVTAERALLAELEAGCSAPVGAIAEVVESIDEDGRIFEELSLRGCVAALDGSDVIRASGIGTPGRARELGLSVAAELFELGARELMSGARHDPARGN</sequence>
<organism>
    <name type="scientific">Mycolicibacterium paratuberculosis (strain ATCC BAA-968 / K-10)</name>
    <name type="common">Mycobacterium paratuberculosis</name>
    <dbReference type="NCBI Taxonomy" id="262316"/>
    <lineage>
        <taxon>Bacteria</taxon>
        <taxon>Bacillati</taxon>
        <taxon>Actinomycetota</taxon>
        <taxon>Actinomycetes</taxon>
        <taxon>Mycobacteriales</taxon>
        <taxon>Mycobacteriaceae</taxon>
        <taxon>Mycobacterium</taxon>
        <taxon>Mycobacterium avium complex (MAC)</taxon>
    </lineage>
</organism>
<evidence type="ECO:0000255" key="1">
    <source>
        <dbReference type="HAMAP-Rule" id="MF_00260"/>
    </source>
</evidence>
<protein>
    <recommendedName>
        <fullName evidence="1">Porphobilinogen deaminase</fullName>
        <shortName evidence="1">PBG</shortName>
        <ecNumber evidence="1">2.5.1.61</ecNumber>
    </recommendedName>
    <alternativeName>
        <fullName evidence="1">Hydroxymethylbilane synthase</fullName>
        <shortName evidence="1">HMBS</shortName>
    </alternativeName>
    <alternativeName>
        <fullName evidence="1">Pre-uroporphyrinogen synthase</fullName>
    </alternativeName>
</protein>
<feature type="chain" id="PRO_0000142959" description="Porphobilinogen deaminase">
    <location>
        <begin position="1"/>
        <end position="315"/>
    </location>
</feature>
<feature type="modified residue" description="S-(dipyrrolylmethanemethyl)cysteine" evidence="1">
    <location>
        <position position="234"/>
    </location>
</feature>
<name>HEM3_MYCPA</name>
<accession>Q73SS0</accession>
<keyword id="KW-0627">Porphyrin biosynthesis</keyword>
<keyword id="KW-1185">Reference proteome</keyword>
<keyword id="KW-0808">Transferase</keyword>